<comment type="function">
    <text evidence="2">Antimicrobial peptide.</text>
</comment>
<comment type="subcellular location">
    <subcellularLocation>
        <location evidence="3 4">Secreted</location>
    </subcellularLocation>
</comment>
<comment type="tissue specificity">
    <text evidence="6">Expressed by the skin glands.</text>
</comment>
<comment type="mass spectrometry"/>
<comment type="similarity">
    <text evidence="3">Belongs to the frog skin active peptide (FSAP) family. Brevinin subfamily.</text>
</comment>
<proteinExistence type="evidence at protein level"/>
<organism evidence="7">
    <name type="scientific">Pelophylax fukienensis</name>
    <name type="common">Fukien gold-striped pond frog</name>
    <name type="synonym">Rana fukienensis</name>
    <dbReference type="NCBI Taxonomy" id="88448"/>
    <lineage>
        <taxon>Eukaryota</taxon>
        <taxon>Metazoa</taxon>
        <taxon>Chordata</taxon>
        <taxon>Craniata</taxon>
        <taxon>Vertebrata</taxon>
        <taxon>Euteleostomi</taxon>
        <taxon>Amphibia</taxon>
        <taxon>Batrachia</taxon>
        <taxon>Anura</taxon>
        <taxon>Neobatrachia</taxon>
        <taxon>Ranoidea</taxon>
        <taxon>Ranidae</taxon>
        <taxon>Pelophylax</taxon>
    </lineage>
</organism>
<dbReference type="EMBL" id="AJ972867">
    <property type="protein sequence ID" value="CAI99625.1"/>
    <property type="molecule type" value="mRNA"/>
</dbReference>
<dbReference type="SMR" id="Q2WCN8"/>
<dbReference type="GO" id="GO:0005576">
    <property type="term" value="C:extracellular region"/>
    <property type="evidence" value="ECO:0007669"/>
    <property type="project" value="UniProtKB-SubCell"/>
</dbReference>
<dbReference type="GO" id="GO:0006952">
    <property type="term" value="P:defense response"/>
    <property type="evidence" value="ECO:0007669"/>
    <property type="project" value="UniProtKB-KW"/>
</dbReference>
<dbReference type="InterPro" id="IPR012521">
    <property type="entry name" value="Antimicrobial_frog_2"/>
</dbReference>
<dbReference type="InterPro" id="IPR018247">
    <property type="entry name" value="EF_Hand_1_Ca_BS"/>
</dbReference>
<dbReference type="InterPro" id="IPR004275">
    <property type="entry name" value="Frog_antimicrobial_propeptide"/>
</dbReference>
<dbReference type="Pfam" id="PF08023">
    <property type="entry name" value="Antimicrobial_2"/>
    <property type="match status" value="1"/>
</dbReference>
<dbReference type="Pfam" id="PF03032">
    <property type="entry name" value="FSAP_sig_propep"/>
    <property type="match status" value="1"/>
</dbReference>
<evidence type="ECO:0000250" key="1">
    <source>
        <dbReference type="UniProtKB" id="A0AEI6"/>
    </source>
</evidence>
<evidence type="ECO:0000250" key="2">
    <source>
        <dbReference type="UniProtKB" id="Q8QFQ4"/>
    </source>
</evidence>
<evidence type="ECO:0000255" key="3"/>
<evidence type="ECO:0000269" key="4">
    <source>
    </source>
</evidence>
<evidence type="ECO:0000303" key="5">
    <source>
    </source>
</evidence>
<evidence type="ECO:0000305" key="6">
    <source>
    </source>
</evidence>
<evidence type="ECO:0000312" key="7">
    <source>
        <dbReference type="EMBL" id="CAI99625.1"/>
    </source>
</evidence>
<name>PELO1_PELFU</name>
<protein>
    <recommendedName>
        <fullName evidence="5">Pelophylaxin-1</fullName>
    </recommendedName>
</protein>
<sequence>MFTMKKSLLLVFFLGTIALSLCEEERGADDDNGGEITDEEIKRGILTDTLKGAAKNVAGVLLDKLKCKITGGC</sequence>
<keyword id="KW-0878">Amphibian defense peptide</keyword>
<keyword id="KW-0929">Antimicrobial</keyword>
<keyword id="KW-0165">Cleavage on pair of basic residues</keyword>
<keyword id="KW-0903">Direct protein sequencing</keyword>
<keyword id="KW-1015">Disulfide bond</keyword>
<keyword id="KW-0964">Secreted</keyword>
<keyword id="KW-0732">Signal</keyword>
<feature type="signal peptide" evidence="3">
    <location>
        <begin position="1"/>
        <end position="22"/>
    </location>
</feature>
<feature type="propeptide" id="PRO_0000439442" evidence="6">
    <location>
        <begin position="23"/>
        <end position="41"/>
    </location>
</feature>
<feature type="peptide" id="PRO_0000439443" description="Pelophylaxin-1" evidence="4">
    <location>
        <begin position="44"/>
        <end position="73"/>
    </location>
</feature>
<feature type="disulfide bond" evidence="1">
    <location>
        <begin position="67"/>
        <end position="73"/>
    </location>
</feature>
<accession>Q2WCN8</accession>
<reference evidence="7" key="1">
    <citation type="journal article" date="2006" name="Peptides">
        <title>Pelophylaxins: novel antimicrobial peptide homologs from the skin secretion of the Fukien gold-striped pond frog, Pelophylax plancyi fukienensis: identification by 'shotgun' cDNA cloning and sequence analysis.</title>
        <authorList>
            <person name="Zhou M."/>
            <person name="Chen T."/>
            <person name="Walker B."/>
            <person name="Shaw C."/>
        </authorList>
    </citation>
    <scope>NUCLEOTIDE SEQUENCE [MRNA]</scope>
    <scope>PROTEIN SEQUENCE OF 44-73</scope>
    <scope>SUBCELLULAR LOCATION</scope>
    <scope>MASS SPECTROMETRY</scope>
    <scope>IDENTIFICATION BY MASS SPECTROMETRY</scope>
    <source>
        <tissue evidence="5">Skin secretion</tissue>
    </source>
</reference>